<gene>
    <name type="primary">Rere</name>
    <name type="synonym">Arp</name>
</gene>
<name>RERE_RAT</name>
<dbReference type="EMBL" id="U44091">
    <property type="protein sequence ID" value="AAA98970.1"/>
    <property type="status" value="ALT_FRAME"/>
    <property type="molecule type" value="mRNA"/>
</dbReference>
<dbReference type="EMBL" id="AABR03040456">
    <property type="status" value="NOT_ANNOTATED_CDS"/>
    <property type="molecule type" value="Genomic_DNA"/>
</dbReference>
<dbReference type="EMBL" id="AABR03040863">
    <property type="status" value="NOT_ANNOTATED_CDS"/>
    <property type="molecule type" value="Genomic_DNA"/>
</dbReference>
<dbReference type="EMBL" id="AABR03040940">
    <property type="status" value="NOT_ANNOTATED_CDS"/>
    <property type="molecule type" value="Genomic_DNA"/>
</dbReference>
<dbReference type="EMBL" id="AABR03041203">
    <property type="status" value="NOT_ANNOTATED_CDS"/>
    <property type="molecule type" value="Genomic_DNA"/>
</dbReference>
<dbReference type="PIR" id="T42731">
    <property type="entry name" value="T42731"/>
</dbReference>
<dbReference type="RefSeq" id="NP_446337.2">
    <property type="nucleotide sequence ID" value="NM_053885.2"/>
</dbReference>
<dbReference type="SMR" id="Q62901"/>
<dbReference type="FunCoup" id="Q62901">
    <property type="interactions" value="3441"/>
</dbReference>
<dbReference type="STRING" id="10116.ENSRNOP00000024443"/>
<dbReference type="GlyGen" id="Q62901">
    <property type="glycosylation" value="4 sites"/>
</dbReference>
<dbReference type="iPTMnet" id="Q62901"/>
<dbReference type="PhosphoSitePlus" id="Q62901"/>
<dbReference type="PaxDb" id="10116-ENSRNOP00000024443"/>
<dbReference type="Ensembl" id="ENSRNOT00000024443.4">
    <property type="protein sequence ID" value="ENSRNOP00000024443.4"/>
    <property type="gene ID" value="ENSRNOG00000017940.6"/>
</dbReference>
<dbReference type="GeneID" id="116665"/>
<dbReference type="KEGG" id="rno:116665"/>
<dbReference type="UCSC" id="RGD:629475">
    <property type="organism name" value="rat"/>
</dbReference>
<dbReference type="AGR" id="RGD:629475"/>
<dbReference type="CTD" id="473"/>
<dbReference type="RGD" id="629475">
    <property type="gene designation" value="Rere"/>
</dbReference>
<dbReference type="eggNOG" id="KOG2133">
    <property type="taxonomic scope" value="Eukaryota"/>
</dbReference>
<dbReference type="GeneTree" id="ENSGT00940000153615"/>
<dbReference type="HOGENOM" id="CLU_005292_1_0_1"/>
<dbReference type="InParanoid" id="Q62901"/>
<dbReference type="OMA" id="MPMPHIK"/>
<dbReference type="OrthoDB" id="6147534at2759"/>
<dbReference type="PhylomeDB" id="Q62901"/>
<dbReference type="TreeFam" id="TF328554"/>
<dbReference type="PRO" id="PR:Q62901"/>
<dbReference type="Proteomes" id="UP000002494">
    <property type="component" value="Chromosome 5"/>
</dbReference>
<dbReference type="Bgee" id="ENSRNOG00000017940">
    <property type="expression patterns" value="Expressed in skeletal muscle tissue and 19 other cell types or tissues"/>
</dbReference>
<dbReference type="GO" id="GO:0000118">
    <property type="term" value="C:histone deacetylase complex"/>
    <property type="evidence" value="ECO:0000266"/>
    <property type="project" value="RGD"/>
</dbReference>
<dbReference type="GO" id="GO:0005634">
    <property type="term" value="C:nucleus"/>
    <property type="evidence" value="ECO:0000266"/>
    <property type="project" value="RGD"/>
</dbReference>
<dbReference type="GO" id="GO:0016605">
    <property type="term" value="C:PML body"/>
    <property type="evidence" value="ECO:0007669"/>
    <property type="project" value="UniProtKB-SubCell"/>
</dbReference>
<dbReference type="GO" id="GO:0003682">
    <property type="term" value="F:chromatin binding"/>
    <property type="evidence" value="ECO:0007669"/>
    <property type="project" value="InterPro"/>
</dbReference>
<dbReference type="GO" id="GO:0043565">
    <property type="term" value="F:sequence-specific DNA binding"/>
    <property type="evidence" value="ECO:0007669"/>
    <property type="project" value="InterPro"/>
</dbReference>
<dbReference type="GO" id="GO:0003713">
    <property type="term" value="F:transcription coactivator activity"/>
    <property type="evidence" value="ECO:0000266"/>
    <property type="project" value="RGD"/>
</dbReference>
<dbReference type="GO" id="GO:0003714">
    <property type="term" value="F:transcription corepressor activity"/>
    <property type="evidence" value="ECO:0000266"/>
    <property type="project" value="RGD"/>
</dbReference>
<dbReference type="GO" id="GO:0008270">
    <property type="term" value="F:zinc ion binding"/>
    <property type="evidence" value="ECO:0007669"/>
    <property type="project" value="UniProtKB-KW"/>
</dbReference>
<dbReference type="GO" id="GO:0048755">
    <property type="term" value="P:branching morphogenesis of a nerve"/>
    <property type="evidence" value="ECO:0000266"/>
    <property type="project" value="RGD"/>
</dbReference>
<dbReference type="GO" id="GO:0021930">
    <property type="term" value="P:cerebellar granule cell precursor proliferation"/>
    <property type="evidence" value="ECO:0000266"/>
    <property type="project" value="RGD"/>
</dbReference>
<dbReference type="GO" id="GO:0021691">
    <property type="term" value="P:cerebellar Purkinje cell layer maturation"/>
    <property type="evidence" value="ECO:0000266"/>
    <property type="project" value="RGD"/>
</dbReference>
<dbReference type="GO" id="GO:0021549">
    <property type="term" value="P:cerebellum development"/>
    <property type="evidence" value="ECO:0000266"/>
    <property type="project" value="RGD"/>
</dbReference>
<dbReference type="GO" id="GO:0006338">
    <property type="term" value="P:chromatin remodeling"/>
    <property type="evidence" value="ECO:0000266"/>
    <property type="project" value="RGD"/>
</dbReference>
<dbReference type="GO" id="GO:0048813">
    <property type="term" value="P:dendrite morphogenesis"/>
    <property type="evidence" value="ECO:0000266"/>
    <property type="project" value="RGD"/>
</dbReference>
<dbReference type="GO" id="GO:0021942">
    <property type="term" value="P:radial glia guided migration of Purkinje cell"/>
    <property type="evidence" value="ECO:0000266"/>
    <property type="project" value="RGD"/>
</dbReference>
<dbReference type="CDD" id="cd04709">
    <property type="entry name" value="BAH_MTA"/>
    <property type="match status" value="1"/>
</dbReference>
<dbReference type="CDD" id="cd11661">
    <property type="entry name" value="SANT_MTA3_like"/>
    <property type="match status" value="1"/>
</dbReference>
<dbReference type="CDD" id="cd00202">
    <property type="entry name" value="ZnF_GATA"/>
    <property type="match status" value="1"/>
</dbReference>
<dbReference type="FunFam" id="1.10.10.60:FF:000052">
    <property type="entry name" value="Arginine-glutamic acid dipeptide (RE) repeats"/>
    <property type="match status" value="1"/>
</dbReference>
<dbReference type="FunFam" id="4.10.1240.50:FF:000003">
    <property type="entry name" value="Arginine-glutamic acid dipeptide (RE) repeats a"/>
    <property type="match status" value="1"/>
</dbReference>
<dbReference type="Gene3D" id="2.30.30.490">
    <property type="match status" value="1"/>
</dbReference>
<dbReference type="Gene3D" id="4.10.1240.50">
    <property type="match status" value="1"/>
</dbReference>
<dbReference type="Gene3D" id="1.10.10.60">
    <property type="entry name" value="Homeodomain-like"/>
    <property type="match status" value="1"/>
</dbReference>
<dbReference type="InterPro" id="IPR002951">
    <property type="entry name" value="Atrophin-like"/>
</dbReference>
<dbReference type="InterPro" id="IPR001025">
    <property type="entry name" value="BAH_dom"/>
</dbReference>
<dbReference type="InterPro" id="IPR043151">
    <property type="entry name" value="BAH_sf"/>
</dbReference>
<dbReference type="InterPro" id="IPR000949">
    <property type="entry name" value="ELM2_dom"/>
</dbReference>
<dbReference type="InterPro" id="IPR009057">
    <property type="entry name" value="Homeodomain-like_sf"/>
</dbReference>
<dbReference type="InterPro" id="IPR001005">
    <property type="entry name" value="SANT/Myb"/>
</dbReference>
<dbReference type="InterPro" id="IPR017884">
    <property type="entry name" value="SANT_dom"/>
</dbReference>
<dbReference type="InterPro" id="IPR000679">
    <property type="entry name" value="Znf_GATA"/>
</dbReference>
<dbReference type="PANTHER" id="PTHR13859:SF12">
    <property type="entry name" value="ARGININE-GLUTAMIC ACID DIPEPTIDE REPEATS PROTEIN"/>
    <property type="match status" value="1"/>
</dbReference>
<dbReference type="PANTHER" id="PTHR13859">
    <property type="entry name" value="ATROPHIN-RELATED"/>
    <property type="match status" value="1"/>
</dbReference>
<dbReference type="Pfam" id="PF03154">
    <property type="entry name" value="Atrophin-1"/>
    <property type="match status" value="1"/>
</dbReference>
<dbReference type="Pfam" id="PF01426">
    <property type="entry name" value="BAH"/>
    <property type="match status" value="1"/>
</dbReference>
<dbReference type="Pfam" id="PF01448">
    <property type="entry name" value="ELM2"/>
    <property type="match status" value="1"/>
</dbReference>
<dbReference type="Pfam" id="PF00320">
    <property type="entry name" value="GATA"/>
    <property type="match status" value="1"/>
</dbReference>
<dbReference type="SMART" id="SM00439">
    <property type="entry name" value="BAH"/>
    <property type="match status" value="1"/>
</dbReference>
<dbReference type="SMART" id="SM01189">
    <property type="entry name" value="ELM2"/>
    <property type="match status" value="1"/>
</dbReference>
<dbReference type="SMART" id="SM00717">
    <property type="entry name" value="SANT"/>
    <property type="match status" value="1"/>
</dbReference>
<dbReference type="SMART" id="SM00401">
    <property type="entry name" value="ZnF_GATA"/>
    <property type="match status" value="1"/>
</dbReference>
<dbReference type="SUPFAM" id="SSF57716">
    <property type="entry name" value="Glucocorticoid receptor-like (DNA-binding domain)"/>
    <property type="match status" value="1"/>
</dbReference>
<dbReference type="SUPFAM" id="SSF46689">
    <property type="entry name" value="Homeodomain-like"/>
    <property type="match status" value="1"/>
</dbReference>
<dbReference type="PROSITE" id="PS51038">
    <property type="entry name" value="BAH"/>
    <property type="match status" value="1"/>
</dbReference>
<dbReference type="PROSITE" id="PS51156">
    <property type="entry name" value="ELM2"/>
    <property type="match status" value="1"/>
</dbReference>
<dbReference type="PROSITE" id="PS51293">
    <property type="entry name" value="SANT"/>
    <property type="match status" value="1"/>
</dbReference>
<evidence type="ECO:0000250" key="1"/>
<evidence type="ECO:0000250" key="2">
    <source>
        <dbReference type="UniProtKB" id="Q80TZ9"/>
    </source>
</evidence>
<evidence type="ECO:0000250" key="3">
    <source>
        <dbReference type="UniProtKB" id="Q9P2R6"/>
    </source>
</evidence>
<evidence type="ECO:0000255" key="4"/>
<evidence type="ECO:0000255" key="5">
    <source>
        <dbReference type="PROSITE-ProRule" id="PRU00370"/>
    </source>
</evidence>
<evidence type="ECO:0000255" key="6">
    <source>
        <dbReference type="PROSITE-ProRule" id="PRU00512"/>
    </source>
</evidence>
<evidence type="ECO:0000255" key="7">
    <source>
        <dbReference type="PROSITE-ProRule" id="PRU00624"/>
    </source>
</evidence>
<evidence type="ECO:0000256" key="8">
    <source>
        <dbReference type="SAM" id="MobiDB-lite"/>
    </source>
</evidence>
<evidence type="ECO:0000269" key="9">
    <source>
    </source>
</evidence>
<evidence type="ECO:0000305" key="10"/>
<evidence type="ECO:0007744" key="11">
    <source>
    </source>
</evidence>
<keyword id="KW-0007">Acetylation</keyword>
<keyword id="KW-0175">Coiled coil</keyword>
<keyword id="KW-0217">Developmental protein</keyword>
<keyword id="KW-1017">Isopeptide bond</keyword>
<keyword id="KW-0479">Metal-binding</keyword>
<keyword id="KW-0539">Nucleus</keyword>
<keyword id="KW-0597">Phosphoprotein</keyword>
<keyword id="KW-1185">Reference proteome</keyword>
<keyword id="KW-0678">Repressor</keyword>
<keyword id="KW-0804">Transcription</keyword>
<keyword id="KW-0805">Transcription regulation</keyword>
<keyword id="KW-0832">Ubl conjugation</keyword>
<keyword id="KW-0862">Zinc</keyword>
<keyword id="KW-0863">Zinc-finger</keyword>
<reference key="1">
    <citation type="journal article" date="1996" name="Neurobiol. Dis.">
        <title>cDNA cloning and characterization of an atrophin-1 (DRPLA disease gene)-related protein.</title>
        <authorList>
            <person name="Khan F.A."/>
            <person name="Margolis R.L."/>
            <person name="Loev S.L."/>
            <person name="Sharp A.H."/>
            <person name="Li S.-H."/>
            <person name="Ross C.A."/>
        </authorList>
    </citation>
    <scope>NUCLEOTIDE SEQUENCE [MRNA]</scope>
    <scope>TISSUE SPECIFICITY</scope>
</reference>
<reference key="2">
    <citation type="journal article" date="2004" name="Nature">
        <title>Genome sequence of the Brown Norway rat yields insights into mammalian evolution.</title>
        <authorList>
            <person name="Gibbs R.A."/>
            <person name="Weinstock G.M."/>
            <person name="Metzker M.L."/>
            <person name="Muzny D.M."/>
            <person name="Sodergren E.J."/>
            <person name="Scherer S."/>
            <person name="Scott G."/>
            <person name="Steffen D."/>
            <person name="Worley K.C."/>
            <person name="Burch P.E."/>
            <person name="Okwuonu G."/>
            <person name="Hines S."/>
            <person name="Lewis L."/>
            <person name="Deramo C."/>
            <person name="Delgado O."/>
            <person name="Dugan-Rocha S."/>
            <person name="Miner G."/>
            <person name="Morgan M."/>
            <person name="Hawes A."/>
            <person name="Gill R."/>
            <person name="Holt R.A."/>
            <person name="Adams M.D."/>
            <person name="Amanatides P.G."/>
            <person name="Baden-Tillson H."/>
            <person name="Barnstead M."/>
            <person name="Chin S."/>
            <person name="Evans C.A."/>
            <person name="Ferriera S."/>
            <person name="Fosler C."/>
            <person name="Glodek A."/>
            <person name="Gu Z."/>
            <person name="Jennings D."/>
            <person name="Kraft C.L."/>
            <person name="Nguyen T."/>
            <person name="Pfannkoch C.M."/>
            <person name="Sitter C."/>
            <person name="Sutton G.G."/>
            <person name="Venter J.C."/>
            <person name="Woodage T."/>
            <person name="Smith D."/>
            <person name="Lee H.-M."/>
            <person name="Gustafson E."/>
            <person name="Cahill P."/>
            <person name="Kana A."/>
            <person name="Doucette-Stamm L."/>
            <person name="Weinstock K."/>
            <person name="Fechtel K."/>
            <person name="Weiss R.B."/>
            <person name="Dunn D.M."/>
            <person name="Green E.D."/>
            <person name="Blakesley R.W."/>
            <person name="Bouffard G.G."/>
            <person name="De Jong P.J."/>
            <person name="Osoegawa K."/>
            <person name="Zhu B."/>
            <person name="Marra M."/>
            <person name="Schein J."/>
            <person name="Bosdet I."/>
            <person name="Fjell C."/>
            <person name="Jones S."/>
            <person name="Krzywinski M."/>
            <person name="Mathewson C."/>
            <person name="Siddiqui A."/>
            <person name="Wye N."/>
            <person name="McPherson J."/>
            <person name="Zhao S."/>
            <person name="Fraser C.M."/>
            <person name="Shetty J."/>
            <person name="Shatsman S."/>
            <person name="Geer K."/>
            <person name="Chen Y."/>
            <person name="Abramzon S."/>
            <person name="Nierman W.C."/>
            <person name="Havlak P.H."/>
            <person name="Chen R."/>
            <person name="Durbin K.J."/>
            <person name="Egan A."/>
            <person name="Ren Y."/>
            <person name="Song X.-Z."/>
            <person name="Li B."/>
            <person name="Liu Y."/>
            <person name="Qin X."/>
            <person name="Cawley S."/>
            <person name="Cooney A.J."/>
            <person name="D'Souza L.M."/>
            <person name="Martin K."/>
            <person name="Wu J.Q."/>
            <person name="Gonzalez-Garay M.L."/>
            <person name="Jackson A.R."/>
            <person name="Kalafus K.J."/>
            <person name="McLeod M.P."/>
            <person name="Milosavljevic A."/>
            <person name="Virk D."/>
            <person name="Volkov A."/>
            <person name="Wheeler D.A."/>
            <person name="Zhang Z."/>
            <person name="Bailey J.A."/>
            <person name="Eichler E.E."/>
            <person name="Tuzun E."/>
            <person name="Birney E."/>
            <person name="Mongin E."/>
            <person name="Ureta-Vidal A."/>
            <person name="Woodwark C."/>
            <person name="Zdobnov E."/>
            <person name="Bork P."/>
            <person name="Suyama M."/>
            <person name="Torrents D."/>
            <person name="Alexandersson M."/>
            <person name="Trask B.J."/>
            <person name="Young J.M."/>
            <person name="Huang H."/>
            <person name="Wang H."/>
            <person name="Xing H."/>
            <person name="Daniels S."/>
            <person name="Gietzen D."/>
            <person name="Schmidt J."/>
            <person name="Stevens K."/>
            <person name="Vitt U."/>
            <person name="Wingrove J."/>
            <person name="Camara F."/>
            <person name="Mar Alba M."/>
            <person name="Abril J.F."/>
            <person name="Guigo R."/>
            <person name="Smit A."/>
            <person name="Dubchak I."/>
            <person name="Rubin E.M."/>
            <person name="Couronne O."/>
            <person name="Poliakov A."/>
            <person name="Huebner N."/>
            <person name="Ganten D."/>
            <person name="Goesele C."/>
            <person name="Hummel O."/>
            <person name="Kreitler T."/>
            <person name="Lee Y.-A."/>
            <person name="Monti J."/>
            <person name="Schulz H."/>
            <person name="Zimdahl H."/>
            <person name="Himmelbauer H."/>
            <person name="Lehrach H."/>
            <person name="Jacob H.J."/>
            <person name="Bromberg S."/>
            <person name="Gullings-Handley J."/>
            <person name="Jensen-Seaman M.I."/>
            <person name="Kwitek A.E."/>
            <person name="Lazar J."/>
            <person name="Pasko D."/>
            <person name="Tonellato P.J."/>
            <person name="Twigger S."/>
            <person name="Ponting C.P."/>
            <person name="Duarte J.M."/>
            <person name="Rice S."/>
            <person name="Goodstadt L."/>
            <person name="Beatson S.A."/>
            <person name="Emes R.D."/>
            <person name="Winter E.E."/>
            <person name="Webber C."/>
            <person name="Brandt P."/>
            <person name="Nyakatura G."/>
            <person name="Adetobi M."/>
            <person name="Chiaromonte F."/>
            <person name="Elnitski L."/>
            <person name="Eswara P."/>
            <person name="Hardison R.C."/>
            <person name="Hou M."/>
            <person name="Kolbe D."/>
            <person name="Makova K."/>
            <person name="Miller W."/>
            <person name="Nekrutenko A."/>
            <person name="Riemer C."/>
            <person name="Schwartz S."/>
            <person name="Taylor J."/>
            <person name="Yang S."/>
            <person name="Zhang Y."/>
            <person name="Lindpaintner K."/>
            <person name="Andrews T.D."/>
            <person name="Caccamo M."/>
            <person name="Clamp M."/>
            <person name="Clarke L."/>
            <person name="Curwen V."/>
            <person name="Durbin R.M."/>
            <person name="Eyras E."/>
            <person name="Searle S.M."/>
            <person name="Cooper G.M."/>
            <person name="Batzoglou S."/>
            <person name="Brudno M."/>
            <person name="Sidow A."/>
            <person name="Stone E.A."/>
            <person name="Payseur B.A."/>
            <person name="Bourque G."/>
            <person name="Lopez-Otin C."/>
            <person name="Puente X.S."/>
            <person name="Chakrabarti K."/>
            <person name="Chatterji S."/>
            <person name="Dewey C."/>
            <person name="Pachter L."/>
            <person name="Bray N."/>
            <person name="Yap V.B."/>
            <person name="Caspi A."/>
            <person name="Tesler G."/>
            <person name="Pevzner P.A."/>
            <person name="Haussler D."/>
            <person name="Roskin K.M."/>
            <person name="Baertsch R."/>
            <person name="Clawson H."/>
            <person name="Furey T.S."/>
            <person name="Hinrichs A.S."/>
            <person name="Karolchik D."/>
            <person name="Kent W.J."/>
            <person name="Rosenbloom K.R."/>
            <person name="Trumbower H."/>
            <person name="Weirauch M."/>
            <person name="Cooper D.N."/>
            <person name="Stenson P.D."/>
            <person name="Ma B."/>
            <person name="Brent M."/>
            <person name="Arumugam M."/>
            <person name="Shteynberg D."/>
            <person name="Copley R.R."/>
            <person name="Taylor M.S."/>
            <person name="Riethman H."/>
            <person name="Mudunuri U."/>
            <person name="Peterson J."/>
            <person name="Guyer M."/>
            <person name="Felsenfeld A."/>
            <person name="Old S."/>
            <person name="Mockrin S."/>
            <person name="Collins F.S."/>
        </authorList>
    </citation>
    <scope>NUCLEOTIDE SEQUENCE [LARGE SCALE GENOMIC DNA]</scope>
    <source>
        <strain>Brown Norway</strain>
    </source>
</reference>
<reference key="3">
    <citation type="journal article" date="2012" name="Nat. Commun.">
        <title>Quantitative maps of protein phosphorylation sites across 14 different rat organs and tissues.</title>
        <authorList>
            <person name="Lundby A."/>
            <person name="Secher A."/>
            <person name="Lage K."/>
            <person name="Nordsborg N.B."/>
            <person name="Dmytriyev A."/>
            <person name="Lundby C."/>
            <person name="Olsen J.V."/>
        </authorList>
    </citation>
    <scope>PHOSPHORYLATION [LARGE SCALE ANALYSIS] AT SER-53; SER-56; SER-593; SER-599; SER-641; SER-655; SER-674 AND SER-678</scope>
    <scope>IDENTIFICATION BY MASS SPECTROMETRY [LARGE SCALE ANALYSIS]</scope>
</reference>
<protein>
    <recommendedName>
        <fullName>Arginine-glutamic acid dipeptide repeats protein</fullName>
    </recommendedName>
    <alternativeName>
        <fullName>Atrophin-1-related protein</fullName>
    </alternativeName>
</protein>
<feature type="chain" id="PRO_0000083506" description="Arginine-glutamic acid dipeptide repeats protein">
    <location>
        <begin position="1"/>
        <end position="1559"/>
    </location>
</feature>
<feature type="domain" description="BAH" evidence="5">
    <location>
        <begin position="102"/>
        <end position="282"/>
    </location>
</feature>
<feature type="domain" description="ELM2" evidence="6">
    <location>
        <begin position="283"/>
        <end position="386"/>
    </location>
</feature>
<feature type="domain" description="SANT" evidence="7">
    <location>
        <begin position="390"/>
        <end position="442"/>
    </location>
</feature>
<feature type="zinc finger region" description="GATA-type">
    <location>
        <begin position="507"/>
        <end position="532"/>
    </location>
</feature>
<feature type="region of interest" description="Disordered" evidence="8">
    <location>
        <begin position="1"/>
        <end position="89"/>
    </location>
</feature>
<feature type="region of interest" description="Disordered" evidence="8">
    <location>
        <begin position="463"/>
        <end position="494"/>
    </location>
</feature>
<feature type="region of interest" description="Disordered" evidence="8">
    <location>
        <begin position="541"/>
        <end position="1125"/>
    </location>
</feature>
<feature type="region of interest" description="Disordered" evidence="8">
    <location>
        <begin position="1154"/>
        <end position="1239"/>
    </location>
</feature>
<feature type="coiled-coil region" evidence="4">
    <location>
        <begin position="1148"/>
        <end position="1205"/>
    </location>
</feature>
<feature type="compositionally biased region" description="Basic and acidic residues" evidence="8">
    <location>
        <begin position="1"/>
        <end position="36"/>
    </location>
</feature>
<feature type="compositionally biased region" description="Basic residues" evidence="8">
    <location>
        <begin position="73"/>
        <end position="84"/>
    </location>
</feature>
<feature type="compositionally biased region" description="Polar residues" evidence="8">
    <location>
        <begin position="464"/>
        <end position="473"/>
    </location>
</feature>
<feature type="compositionally biased region" description="Low complexity" evidence="8">
    <location>
        <begin position="478"/>
        <end position="487"/>
    </location>
</feature>
<feature type="compositionally biased region" description="Low complexity" evidence="8">
    <location>
        <begin position="608"/>
        <end position="622"/>
    </location>
</feature>
<feature type="compositionally biased region" description="Basic and acidic residues" evidence="8">
    <location>
        <begin position="623"/>
        <end position="639"/>
    </location>
</feature>
<feature type="compositionally biased region" description="Basic and acidic residues" evidence="8">
    <location>
        <begin position="651"/>
        <end position="672"/>
    </location>
</feature>
<feature type="compositionally biased region" description="Basic and acidic residues" evidence="8">
    <location>
        <begin position="687"/>
        <end position="707"/>
    </location>
</feature>
<feature type="compositionally biased region" description="Polar residues" evidence="8">
    <location>
        <begin position="708"/>
        <end position="735"/>
    </location>
</feature>
<feature type="compositionally biased region" description="Low complexity" evidence="8">
    <location>
        <begin position="736"/>
        <end position="761"/>
    </location>
</feature>
<feature type="compositionally biased region" description="Polar residues" evidence="8">
    <location>
        <begin position="768"/>
        <end position="791"/>
    </location>
</feature>
<feature type="compositionally biased region" description="Pro residues" evidence="8">
    <location>
        <begin position="805"/>
        <end position="822"/>
    </location>
</feature>
<feature type="compositionally biased region" description="Low complexity" evidence="8">
    <location>
        <begin position="890"/>
        <end position="900"/>
    </location>
</feature>
<feature type="compositionally biased region" description="Pro residues" evidence="8">
    <location>
        <begin position="901"/>
        <end position="931"/>
    </location>
</feature>
<feature type="compositionally biased region" description="Low complexity" evidence="8">
    <location>
        <begin position="961"/>
        <end position="971"/>
    </location>
</feature>
<feature type="compositionally biased region" description="Pro residues" evidence="8">
    <location>
        <begin position="1027"/>
        <end position="1053"/>
    </location>
</feature>
<feature type="compositionally biased region" description="Low complexity" evidence="8">
    <location>
        <begin position="1054"/>
        <end position="1068"/>
    </location>
</feature>
<feature type="compositionally biased region" description="Pro residues" evidence="8">
    <location>
        <begin position="1098"/>
        <end position="1109"/>
    </location>
</feature>
<feature type="compositionally biased region" description="Basic and acidic residues" evidence="8">
    <location>
        <begin position="1154"/>
        <end position="1198"/>
    </location>
</feature>
<feature type="modified residue" description="Phosphoserine" evidence="11">
    <location>
        <position position="53"/>
    </location>
</feature>
<feature type="modified residue" description="Phosphoserine" evidence="11">
    <location>
        <position position="56"/>
    </location>
</feature>
<feature type="modified residue" description="Phosphothreonine" evidence="3">
    <location>
        <position position="119"/>
    </location>
</feature>
<feature type="modified residue" description="Phosphoserine" evidence="2">
    <location>
        <position position="141"/>
    </location>
</feature>
<feature type="modified residue" description="Phosphoserine" evidence="3">
    <location>
        <position position="303"/>
    </location>
</feature>
<feature type="modified residue" description="Phosphoserine" evidence="11">
    <location>
        <position position="593"/>
    </location>
</feature>
<feature type="modified residue" description="Phosphoserine" evidence="11">
    <location>
        <position position="599"/>
    </location>
</feature>
<feature type="modified residue" description="Phosphoserine" evidence="3">
    <location>
        <position position="612"/>
    </location>
</feature>
<feature type="modified residue" description="Phosphoserine" evidence="11">
    <location>
        <position position="641"/>
    </location>
</feature>
<feature type="modified residue" description="Phosphoserine" evidence="11">
    <location>
        <position position="655"/>
    </location>
</feature>
<feature type="modified residue" description="Phosphoserine" evidence="11">
    <location>
        <position position="674"/>
    </location>
</feature>
<feature type="modified residue" description="Phosphoserine" evidence="11">
    <location>
        <position position="678"/>
    </location>
</feature>
<feature type="modified residue" description="Phosphoserine" evidence="3">
    <location>
        <position position="1098"/>
    </location>
</feature>
<feature type="modified residue" description="Phosphoserine" evidence="3">
    <location>
        <position position="1105"/>
    </location>
</feature>
<feature type="modified residue" description="Phosphoserine" evidence="2">
    <location>
        <position position="1107"/>
    </location>
</feature>
<feature type="modified residue" description="Phosphothreonine" evidence="3">
    <location>
        <position position="1111"/>
    </location>
</feature>
<feature type="modified residue" description="N6-acetyllysine" evidence="2">
    <location>
        <position position="1150"/>
    </location>
</feature>
<feature type="modified residue" description="Phosphotyrosine" evidence="3">
    <location>
        <position position="1252"/>
    </location>
</feature>
<feature type="modified residue" description="Phosphoserine" evidence="3">
    <location>
        <position position="1259"/>
    </location>
</feature>
<feature type="cross-link" description="Glycyl lysine isopeptide (Lys-Gly) (interchain with G-Cter in SUMO2)" evidence="3">
    <location>
        <position position="559"/>
    </location>
</feature>
<feature type="cross-link" description="Glycyl lysine isopeptide (Lys-Gly) (interchain with G-Cter in SUMO2)" evidence="3">
    <location>
        <position position="636"/>
    </location>
</feature>
<feature type="sequence conflict" description="In Ref. 1; AAA98970." evidence="10" ref="1">
    <original>MC</original>
    <variation>IVV</variation>
    <location>
        <begin position="342"/>
        <end position="343"/>
    </location>
</feature>
<feature type="sequence conflict" description="In Ref. 1; AAA98970." evidence="10" ref="1">
    <original>A</original>
    <variation>G</variation>
    <location>
        <position position="355"/>
    </location>
</feature>
<feature type="sequence conflict" description="In Ref. 1; AAA98970." evidence="10" ref="1">
    <original>T</original>
    <variation>N</variation>
    <location>
        <position position="360"/>
    </location>
</feature>
<comment type="function">
    <text evidence="1">Plays a role as a transcriptional repressor during development. May play a role in the control of cell survival (By similarity). Interacts with FAT1 (By similarity).</text>
</comment>
<comment type="subunit">
    <text evidence="1">Interacts with HDAC1 and ATN1. Interaction with ATN1 is improved when the poly-Gln region of ATN1 is extended (By similarity).</text>
</comment>
<comment type="subcellular location">
    <subcellularLocation>
        <location evidence="1">Nucleus</location>
        <location evidence="1">PML body</location>
    </subcellularLocation>
    <text evidence="1">Localized in nuclear bodies of variable size. Colocalized with PML and BAX in nuclear PODs (By similarity).</text>
</comment>
<comment type="tissue specificity">
    <text evidence="9">Widely expressed.</text>
</comment>
<comment type="domain">
    <text evidence="1">The interaction with ATN1 is mediated by the coiled domain.</text>
</comment>
<comment type="sequence caution" evidence="10">
    <conflict type="frameshift">
        <sequence resource="EMBL-CDS" id="AAA98970"/>
    </conflict>
</comment>
<sequence>MTADKDKDKDKEKDRDRDRDRERDKRDKARESENARPRRSCTLEGGAKNYAESDHSEDEDNDNGATTEESARKSRKKPPKKKSRYERTDTGEITSYITEDDVVYRPGDCVYIESRRPNTPYFICSIQDFKLVHNSQACCRSPAPALCDPPACSLPVASQPPQHLSEAGRGPVGSKRDHLLMNVKWYYRQSEVPDSVYQHLVQDRHNENDSGRELVITDPVIKNRELFISDYVDTYHAAALRGKCNISHFSDIFAAREFKARVDSFFYILGYNPETRRLNSTQGEIRVGPSHQAKLPDLQPFPSPDGDTVTQHEELVWMPGVSDCDLLMYLRAARSMAAFAGMCDGGSTEDGCVAASRDDTTLNALNTLHESSYDAGKALQRLVKKPVPKLIEKCWTEDEVKRFVKGLRQYGKNFFRIRKELLPNKETGELITFYYYWKKTPEAASSRAHRRHRRQAVFRRIKTRTASTPVNTPSRPPSSEFLDLSSASEDDFDSEDSEQELKGYACRHCFTTTSKDWHHGGRENILLCTDCRIHFKKYGELPPIEKPVDPPPFMFKPVKEEDDGLSGKHSMRTRRSRGSMSTLRSGRKKQPASPDGRASPVNEDVRSSGRNSPSAASTSSNDSKAEAVKKSAKKVKEEAASPLKNTKRQREKVASDTEDTDRATSKKTKTQEISRPNSPSEGEGESSDSRSVNDEGSSDPKDIDQDNRSTSPSIPSPQDNESDSDSSAQQQMLQTQPPALQAPSGAASAPSTAPPGTTQLPTPGPTPSATTVPPQGSPATSQPPNQTQSTVAPAAHTLIQQTPTLHPPRLPSPHPPLQPMTAPPSQNSAQPHPQPSLHGQGPPGPHSLQTGPLLQHPGPPQPFGLTPQSSQGQGPLGPSPAAAHPHSTIQLPASQSALQPQQPPREQPLPPAPLAMPHIKPPPTTPIPQLPAPQAHKHPPHLSGPSPFSMNANLPPPPALKPLSSLSTHHPPSAHPPPLQLMPQSQPLPSSPAQPPGLTQSQSLPPPAASHPTTGGLHQVPSQSPFPQHPFVPGGPPPITPPSCPPTSTPPAGPSSSSQPPCSAAVSSGGNVPGAPSCPLPAVQIKEEALDEAEEPESPPPPPRSPSPEPTVVDTPSHASQSARFYKHLDRGYNSCARTDLYFMPLAGSKLAKKREEAIEKAKREAEQKAREEREREKEKEKEREREREREREAERAAQKASSSAHEGRLSDPQLSGPGHMRPSFEPPPTTIAAVPPYIGPDTPALRTLSEYARPHVMSPTNRNHPFYMPLNPTDPLLAYHMPGLYNVDPTIRERELREREIREREIRERELRERMKPGFEVKPPELDPLHPATNPMEHFARHSALTIPPAAGPHPFASFHPGLNPLERERLALAGPQLRPEMSYPDRLAAERIHAERMASLTSDPLARLQMFNVTPHHHQHSHIHSHLHLHQQDPLHQGSAGPVHPLVDPLTAGPHLARFPYPPGTLPNPLLGQPPHEHEMLRHPVFGTPYPRDLPGAIPPPMSAAHQLQAMHAQSAELQRLAMEQQWLHGHPHMHGGHLPSQEDYYSRLKKEGDKQL</sequence>
<organism>
    <name type="scientific">Rattus norvegicus</name>
    <name type="common">Rat</name>
    <dbReference type="NCBI Taxonomy" id="10116"/>
    <lineage>
        <taxon>Eukaryota</taxon>
        <taxon>Metazoa</taxon>
        <taxon>Chordata</taxon>
        <taxon>Craniata</taxon>
        <taxon>Vertebrata</taxon>
        <taxon>Euteleostomi</taxon>
        <taxon>Mammalia</taxon>
        <taxon>Eutheria</taxon>
        <taxon>Euarchontoglires</taxon>
        <taxon>Glires</taxon>
        <taxon>Rodentia</taxon>
        <taxon>Myomorpha</taxon>
        <taxon>Muroidea</taxon>
        <taxon>Muridae</taxon>
        <taxon>Murinae</taxon>
        <taxon>Rattus</taxon>
    </lineage>
</organism>
<accession>Q62901</accession>
<proteinExistence type="evidence at protein level"/>